<organism>
    <name type="scientific">Streptococcus pyogenes serotype M5 (strain Manfredo)</name>
    <dbReference type="NCBI Taxonomy" id="160491"/>
    <lineage>
        <taxon>Bacteria</taxon>
        <taxon>Bacillati</taxon>
        <taxon>Bacillota</taxon>
        <taxon>Bacilli</taxon>
        <taxon>Lactobacillales</taxon>
        <taxon>Streptococcaceae</taxon>
        <taxon>Streptococcus</taxon>
    </lineage>
</organism>
<accession>A2RCQ1</accession>
<evidence type="ECO:0000255" key="1">
    <source>
        <dbReference type="HAMAP-Rule" id="MF_01113"/>
    </source>
</evidence>
<name>DPO4_STRPG</name>
<reference key="1">
    <citation type="journal article" date="2007" name="J. Bacteriol.">
        <title>Complete genome of acute rheumatic fever-associated serotype M5 Streptococcus pyogenes strain Manfredo.</title>
        <authorList>
            <person name="Holden M.T.G."/>
            <person name="Scott A."/>
            <person name="Cherevach I."/>
            <person name="Chillingworth T."/>
            <person name="Churcher C."/>
            <person name="Cronin A."/>
            <person name="Dowd L."/>
            <person name="Feltwell T."/>
            <person name="Hamlin N."/>
            <person name="Holroyd S."/>
            <person name="Jagels K."/>
            <person name="Moule S."/>
            <person name="Mungall K."/>
            <person name="Quail M.A."/>
            <person name="Price C."/>
            <person name="Rabbinowitsch E."/>
            <person name="Sharp S."/>
            <person name="Skelton J."/>
            <person name="Whitehead S."/>
            <person name="Barrell B.G."/>
            <person name="Kehoe M."/>
            <person name="Parkhill J."/>
        </authorList>
    </citation>
    <scope>NUCLEOTIDE SEQUENCE [LARGE SCALE GENOMIC DNA]</scope>
    <source>
        <strain>Manfredo</strain>
    </source>
</reference>
<dbReference type="EC" id="2.7.7.7" evidence="1"/>
<dbReference type="EMBL" id="AM295007">
    <property type="protein sequence ID" value="CAM29624.1"/>
    <property type="molecule type" value="Genomic_DNA"/>
</dbReference>
<dbReference type="RefSeq" id="WP_011888612.1">
    <property type="nucleotide sequence ID" value="NC_009332.1"/>
</dbReference>
<dbReference type="SMR" id="A2RCQ1"/>
<dbReference type="KEGG" id="spf:SpyM50282"/>
<dbReference type="HOGENOM" id="CLU_012348_1_2_9"/>
<dbReference type="GO" id="GO:0005829">
    <property type="term" value="C:cytosol"/>
    <property type="evidence" value="ECO:0007669"/>
    <property type="project" value="TreeGrafter"/>
</dbReference>
<dbReference type="GO" id="GO:0003684">
    <property type="term" value="F:damaged DNA binding"/>
    <property type="evidence" value="ECO:0007669"/>
    <property type="project" value="InterPro"/>
</dbReference>
<dbReference type="GO" id="GO:0003887">
    <property type="term" value="F:DNA-directed DNA polymerase activity"/>
    <property type="evidence" value="ECO:0007669"/>
    <property type="project" value="UniProtKB-UniRule"/>
</dbReference>
<dbReference type="GO" id="GO:0000287">
    <property type="term" value="F:magnesium ion binding"/>
    <property type="evidence" value="ECO:0007669"/>
    <property type="project" value="UniProtKB-UniRule"/>
</dbReference>
<dbReference type="GO" id="GO:0006261">
    <property type="term" value="P:DNA-templated DNA replication"/>
    <property type="evidence" value="ECO:0007669"/>
    <property type="project" value="UniProtKB-UniRule"/>
</dbReference>
<dbReference type="GO" id="GO:0042276">
    <property type="term" value="P:error-prone translesion synthesis"/>
    <property type="evidence" value="ECO:0007669"/>
    <property type="project" value="TreeGrafter"/>
</dbReference>
<dbReference type="GO" id="GO:0009432">
    <property type="term" value="P:SOS response"/>
    <property type="evidence" value="ECO:0007669"/>
    <property type="project" value="TreeGrafter"/>
</dbReference>
<dbReference type="CDD" id="cd03586">
    <property type="entry name" value="PolY_Pol_IV_kappa"/>
    <property type="match status" value="1"/>
</dbReference>
<dbReference type="FunFam" id="3.30.1490.100:FF:000004">
    <property type="entry name" value="DNA polymerase IV"/>
    <property type="match status" value="1"/>
</dbReference>
<dbReference type="FunFam" id="3.40.1170.60:FF:000001">
    <property type="entry name" value="DNA polymerase IV"/>
    <property type="match status" value="1"/>
</dbReference>
<dbReference type="Gene3D" id="3.30.70.270">
    <property type="match status" value="1"/>
</dbReference>
<dbReference type="Gene3D" id="3.40.1170.60">
    <property type="match status" value="1"/>
</dbReference>
<dbReference type="Gene3D" id="1.10.150.20">
    <property type="entry name" value="5' to 3' exonuclease, C-terminal subdomain"/>
    <property type="match status" value="1"/>
</dbReference>
<dbReference type="Gene3D" id="3.30.1490.100">
    <property type="entry name" value="DNA polymerase, Y-family, little finger domain"/>
    <property type="match status" value="1"/>
</dbReference>
<dbReference type="HAMAP" id="MF_01113">
    <property type="entry name" value="DNApol_IV"/>
    <property type="match status" value="1"/>
</dbReference>
<dbReference type="InterPro" id="IPR043502">
    <property type="entry name" value="DNA/RNA_pol_sf"/>
</dbReference>
<dbReference type="InterPro" id="IPR036775">
    <property type="entry name" value="DNA_pol_Y-fam_lit_finger_sf"/>
</dbReference>
<dbReference type="InterPro" id="IPR017961">
    <property type="entry name" value="DNA_pol_Y-fam_little_finger"/>
</dbReference>
<dbReference type="InterPro" id="IPR050116">
    <property type="entry name" value="DNA_polymerase-Y"/>
</dbReference>
<dbReference type="InterPro" id="IPR022880">
    <property type="entry name" value="DNApol_IV"/>
</dbReference>
<dbReference type="InterPro" id="IPR024728">
    <property type="entry name" value="PolY_HhH_motif"/>
</dbReference>
<dbReference type="InterPro" id="IPR043128">
    <property type="entry name" value="Rev_trsase/Diguanyl_cyclase"/>
</dbReference>
<dbReference type="InterPro" id="IPR001126">
    <property type="entry name" value="UmuC"/>
</dbReference>
<dbReference type="NCBIfam" id="NF002677">
    <property type="entry name" value="PRK02406.1"/>
    <property type="match status" value="1"/>
</dbReference>
<dbReference type="NCBIfam" id="NF010731">
    <property type="entry name" value="PRK14133.1"/>
    <property type="match status" value="1"/>
</dbReference>
<dbReference type="PANTHER" id="PTHR11076:SF33">
    <property type="entry name" value="DNA POLYMERASE KAPPA"/>
    <property type="match status" value="1"/>
</dbReference>
<dbReference type="PANTHER" id="PTHR11076">
    <property type="entry name" value="DNA REPAIR POLYMERASE UMUC / TRANSFERASE FAMILY MEMBER"/>
    <property type="match status" value="1"/>
</dbReference>
<dbReference type="Pfam" id="PF00817">
    <property type="entry name" value="IMS"/>
    <property type="match status" value="1"/>
</dbReference>
<dbReference type="Pfam" id="PF11799">
    <property type="entry name" value="IMS_C"/>
    <property type="match status" value="1"/>
</dbReference>
<dbReference type="Pfam" id="PF11798">
    <property type="entry name" value="IMS_HHH"/>
    <property type="match status" value="1"/>
</dbReference>
<dbReference type="SUPFAM" id="SSF56672">
    <property type="entry name" value="DNA/RNA polymerases"/>
    <property type="match status" value="1"/>
</dbReference>
<dbReference type="SUPFAM" id="SSF100879">
    <property type="entry name" value="Lesion bypass DNA polymerase (Y-family), little finger domain"/>
    <property type="match status" value="1"/>
</dbReference>
<dbReference type="PROSITE" id="PS50173">
    <property type="entry name" value="UMUC"/>
    <property type="match status" value="1"/>
</dbReference>
<feature type="chain" id="PRO_1000084958" description="DNA polymerase IV">
    <location>
        <begin position="1"/>
        <end position="364"/>
    </location>
</feature>
<feature type="domain" description="UmuC" evidence="1">
    <location>
        <begin position="14"/>
        <end position="198"/>
    </location>
</feature>
<feature type="active site" evidence="1">
    <location>
        <position position="117"/>
    </location>
</feature>
<feature type="binding site" evidence="1">
    <location>
        <position position="18"/>
    </location>
    <ligand>
        <name>Mg(2+)</name>
        <dbReference type="ChEBI" id="CHEBI:18420"/>
    </ligand>
</feature>
<feature type="binding site" evidence="1">
    <location>
        <position position="116"/>
    </location>
    <ligand>
        <name>Mg(2+)</name>
        <dbReference type="ChEBI" id="CHEBI:18420"/>
    </ligand>
</feature>
<feature type="site" description="Substrate discrimination" evidence="1">
    <location>
        <position position="23"/>
    </location>
</feature>
<comment type="function">
    <text evidence="1">Poorly processive, error-prone DNA polymerase involved in untargeted mutagenesis. Copies undamaged DNA at stalled replication forks, which arise in vivo from mismatched or misaligned primer ends. These misaligned primers can be extended by PolIV. Exhibits no 3'-5' exonuclease (proofreading) activity. May be involved in translesional synthesis, in conjunction with the beta clamp from PolIII.</text>
</comment>
<comment type="catalytic activity">
    <reaction evidence="1">
        <text>DNA(n) + a 2'-deoxyribonucleoside 5'-triphosphate = DNA(n+1) + diphosphate</text>
        <dbReference type="Rhea" id="RHEA:22508"/>
        <dbReference type="Rhea" id="RHEA-COMP:17339"/>
        <dbReference type="Rhea" id="RHEA-COMP:17340"/>
        <dbReference type="ChEBI" id="CHEBI:33019"/>
        <dbReference type="ChEBI" id="CHEBI:61560"/>
        <dbReference type="ChEBI" id="CHEBI:173112"/>
        <dbReference type="EC" id="2.7.7.7"/>
    </reaction>
</comment>
<comment type="cofactor">
    <cofactor evidence="1">
        <name>Mg(2+)</name>
        <dbReference type="ChEBI" id="CHEBI:18420"/>
    </cofactor>
    <text evidence="1">Binds 2 magnesium ions per subunit.</text>
</comment>
<comment type="subunit">
    <text evidence="1">Monomer.</text>
</comment>
<comment type="subcellular location">
    <subcellularLocation>
        <location evidence="1">Cytoplasm</location>
    </subcellularLocation>
</comment>
<comment type="similarity">
    <text evidence="1">Belongs to the DNA polymerase type-Y family.</text>
</comment>
<gene>
    <name evidence="1" type="primary">dinB</name>
    <name type="ordered locus">SpyM50282</name>
</gene>
<protein>
    <recommendedName>
        <fullName evidence="1">DNA polymerase IV</fullName>
        <shortName evidence="1">Pol IV</shortName>
        <ecNumber evidence="1">2.7.7.7</ecNumber>
    </recommendedName>
</protein>
<keyword id="KW-0963">Cytoplasm</keyword>
<keyword id="KW-0227">DNA damage</keyword>
<keyword id="KW-0234">DNA repair</keyword>
<keyword id="KW-0235">DNA replication</keyword>
<keyword id="KW-0238">DNA-binding</keyword>
<keyword id="KW-0239">DNA-directed DNA polymerase</keyword>
<keyword id="KW-0460">Magnesium</keyword>
<keyword id="KW-0479">Metal-binding</keyword>
<keyword id="KW-0515">Mutator protein</keyword>
<keyword id="KW-0548">Nucleotidyltransferase</keyword>
<keyword id="KW-0808">Transferase</keyword>
<proteinExistence type="inferred from homology"/>
<sequence length="364" mass="40774">MLIFPLINDTSRKIIHIDMDAFFAAVEERDNPALKGKPVVIGKDPRETGGRGVVSTCNYEARKYGIHSAMSSKEAYERCPKAIFISGNYEKYRTVGDQIRRIFKRYTDLVEPMSIDEAYLDVTDNKLGIKSAVKIAKLIQHDIWKEVGLTCSAGVSYNKFLAKLASDFEKPHGLTLVLKEDALCFLAKLPIEKFHGVGKKSVEKLHDMGIYTGQDLLAVPEMTLIDHFGRFGFDLYRKARGISNSPVKSDRIRKSIGSERTYAKLLYQETDIKAEISKNAKRVAALLQDHKKLGKTIVLKVRYADFTTLTKRVTLPELTRNAAQIEQVAGDIFDSLSENPAGIRLLGVTMTNLEDKVADISLNL</sequence>